<accession>Q02146</accession>
<accession>O34129</accession>
<accession>Q9CG96</accession>
<evidence type="ECO:0000255" key="1"/>
<evidence type="ECO:0000255" key="2">
    <source>
        <dbReference type="HAMAP-Rule" id="MF_01895"/>
    </source>
</evidence>
<evidence type="ECO:0000305" key="3"/>
<feature type="chain" id="PRO_0000166407" description="Ribonuclease R 2">
    <location>
        <begin position="1"/>
        <end position="665"/>
    </location>
</feature>
<feature type="domain" description="RNB" evidence="1">
    <location>
        <begin position="202"/>
        <end position="528"/>
    </location>
</feature>
<feature type="domain" description="S1 motif" evidence="2">
    <location>
        <begin position="579"/>
        <end position="662"/>
    </location>
</feature>
<feature type="sequence conflict" description="In Ref. 2; AAB81900." evidence="3" ref="2">
    <original>H</original>
    <variation>R</variation>
    <location>
        <position position="535"/>
    </location>
</feature>
<feature type="sequence conflict" description="In Ref. 2; AAB81900." evidence="3" ref="2">
    <original>K</original>
    <variation>T</variation>
    <location>
        <position position="629"/>
    </location>
</feature>
<proteinExistence type="inferred from homology"/>
<gene>
    <name evidence="2" type="primary">rnr2</name>
    <name type="synonym">vacB2</name>
    <name type="ordered locus">LL1205</name>
    <name type="ORF">L25961</name>
</gene>
<name>RNR2_LACLA</name>
<organism>
    <name type="scientific">Lactococcus lactis subsp. lactis (strain IL1403)</name>
    <name type="common">Streptococcus lactis</name>
    <dbReference type="NCBI Taxonomy" id="272623"/>
    <lineage>
        <taxon>Bacteria</taxon>
        <taxon>Bacillati</taxon>
        <taxon>Bacillota</taxon>
        <taxon>Bacilli</taxon>
        <taxon>Lactobacillales</taxon>
        <taxon>Streptococcaceae</taxon>
        <taxon>Lactococcus</taxon>
    </lineage>
</organism>
<dbReference type="EC" id="3.1.13.1" evidence="2"/>
<dbReference type="EMBL" id="AE005176">
    <property type="protein sequence ID" value="AAK05303.1"/>
    <property type="molecule type" value="Genomic_DNA"/>
</dbReference>
<dbReference type="EMBL" id="U92974">
    <property type="protein sequence ID" value="AAB81900.1"/>
    <property type="molecule type" value="Genomic_DNA"/>
</dbReference>
<dbReference type="PIR" id="A45734">
    <property type="entry name" value="A45734"/>
</dbReference>
<dbReference type="PIR" id="E86775">
    <property type="entry name" value="E86775"/>
</dbReference>
<dbReference type="RefSeq" id="NP_267361.1">
    <property type="nucleotide sequence ID" value="NC_002662.1"/>
</dbReference>
<dbReference type="SMR" id="Q02146"/>
<dbReference type="PaxDb" id="272623-L25961"/>
<dbReference type="EnsemblBacteria" id="AAK05303">
    <property type="protein sequence ID" value="AAK05303"/>
    <property type="gene ID" value="L25961"/>
</dbReference>
<dbReference type="KEGG" id="lla:L25961"/>
<dbReference type="PATRIC" id="fig|272623.7.peg.1300"/>
<dbReference type="eggNOG" id="COG0557">
    <property type="taxonomic scope" value="Bacteria"/>
</dbReference>
<dbReference type="HOGENOM" id="CLU_002333_7_0_9"/>
<dbReference type="OrthoDB" id="9764149at2"/>
<dbReference type="Proteomes" id="UP000002196">
    <property type="component" value="Chromosome"/>
</dbReference>
<dbReference type="GO" id="GO:0005829">
    <property type="term" value="C:cytosol"/>
    <property type="evidence" value="ECO:0007669"/>
    <property type="project" value="TreeGrafter"/>
</dbReference>
<dbReference type="GO" id="GO:0008859">
    <property type="term" value="F:exoribonuclease II activity"/>
    <property type="evidence" value="ECO:0007669"/>
    <property type="project" value="UniProtKB-UniRule"/>
</dbReference>
<dbReference type="GO" id="GO:0003723">
    <property type="term" value="F:RNA binding"/>
    <property type="evidence" value="ECO:0007669"/>
    <property type="project" value="UniProtKB-UniRule"/>
</dbReference>
<dbReference type="GO" id="GO:0006402">
    <property type="term" value="P:mRNA catabolic process"/>
    <property type="evidence" value="ECO:0007669"/>
    <property type="project" value="TreeGrafter"/>
</dbReference>
<dbReference type="CDD" id="cd04471">
    <property type="entry name" value="S1_RNase_R"/>
    <property type="match status" value="1"/>
</dbReference>
<dbReference type="Gene3D" id="2.40.50.140">
    <property type="entry name" value="Nucleic acid-binding proteins"/>
    <property type="match status" value="2"/>
</dbReference>
<dbReference type="HAMAP" id="MF_01895">
    <property type="entry name" value="RNase_R"/>
    <property type="match status" value="1"/>
</dbReference>
<dbReference type="InterPro" id="IPR011129">
    <property type="entry name" value="CSD"/>
</dbReference>
<dbReference type="InterPro" id="IPR040476">
    <property type="entry name" value="CSD2"/>
</dbReference>
<dbReference type="InterPro" id="IPR012340">
    <property type="entry name" value="NA-bd_OB-fold"/>
</dbReference>
<dbReference type="InterPro" id="IPR013223">
    <property type="entry name" value="RNase_B_OB_dom"/>
</dbReference>
<dbReference type="InterPro" id="IPR001900">
    <property type="entry name" value="RNase_II/R"/>
</dbReference>
<dbReference type="InterPro" id="IPR022966">
    <property type="entry name" value="RNase_II/R_CS"/>
</dbReference>
<dbReference type="InterPro" id="IPR004476">
    <property type="entry name" value="RNase_II/RNase_R"/>
</dbReference>
<dbReference type="InterPro" id="IPR011805">
    <property type="entry name" value="RNase_R"/>
</dbReference>
<dbReference type="InterPro" id="IPR050180">
    <property type="entry name" value="RNR_Ribonuclease"/>
</dbReference>
<dbReference type="InterPro" id="IPR003029">
    <property type="entry name" value="S1_domain"/>
</dbReference>
<dbReference type="NCBIfam" id="TIGR00358">
    <property type="entry name" value="3_prime_RNase"/>
    <property type="match status" value="1"/>
</dbReference>
<dbReference type="NCBIfam" id="TIGR02063">
    <property type="entry name" value="RNase_R"/>
    <property type="match status" value="1"/>
</dbReference>
<dbReference type="PANTHER" id="PTHR23355:SF9">
    <property type="entry name" value="DIS3-LIKE EXONUCLEASE 2"/>
    <property type="match status" value="1"/>
</dbReference>
<dbReference type="PANTHER" id="PTHR23355">
    <property type="entry name" value="RIBONUCLEASE"/>
    <property type="match status" value="1"/>
</dbReference>
<dbReference type="Pfam" id="PF17876">
    <property type="entry name" value="CSD2"/>
    <property type="match status" value="1"/>
</dbReference>
<dbReference type="Pfam" id="PF08206">
    <property type="entry name" value="OB_RNB"/>
    <property type="match status" value="1"/>
</dbReference>
<dbReference type="Pfam" id="PF00773">
    <property type="entry name" value="RNB"/>
    <property type="match status" value="1"/>
</dbReference>
<dbReference type="Pfam" id="PF00575">
    <property type="entry name" value="S1"/>
    <property type="match status" value="1"/>
</dbReference>
<dbReference type="SMART" id="SM00357">
    <property type="entry name" value="CSP"/>
    <property type="match status" value="1"/>
</dbReference>
<dbReference type="SMART" id="SM00955">
    <property type="entry name" value="RNB"/>
    <property type="match status" value="1"/>
</dbReference>
<dbReference type="SMART" id="SM00316">
    <property type="entry name" value="S1"/>
    <property type="match status" value="1"/>
</dbReference>
<dbReference type="SUPFAM" id="SSF50249">
    <property type="entry name" value="Nucleic acid-binding proteins"/>
    <property type="match status" value="3"/>
</dbReference>
<dbReference type="PROSITE" id="PS01175">
    <property type="entry name" value="RIBONUCLEASE_II"/>
    <property type="match status" value="1"/>
</dbReference>
<dbReference type="PROSITE" id="PS50126">
    <property type="entry name" value="S1"/>
    <property type="match status" value="1"/>
</dbReference>
<sequence>MVQLSELASALNQTESKGVFSKHPKGFGFVHPEDATDKTNDIYIGKNDTKFAMDGDKVTVKVTYPKTEKRGASGQITKINERAVVDTVGTYRSLSNRQVKALGYKGRIELYNDRISDTLYIKQPLSGVQEEDVVSLKITQYPTNTKTFEGKITGIIGHKGEVGLDILEVLCAMKIPQEFSSETLAEAEAFSEKLTDSDLQDREDYRNEITYTIDGDDSKDLDDAIHVKKLSNWHFELGVHIADVSHYVTEGSSLDEEAYSRATSVYVTDRVVPMLPVKLSNNLCSLNEAQERLTMSCLMEIDDKGKIVSYKISPSVIKTTYRMTYNNVNKMIHQGQEGHREALENFFKITDSIKVAVELHEILETMRKDRGMIEFDESEAKIILDEKGHPIEIVKRDRDTAERMIESFMLMANETVALDFQKKKLPSLYRVHDNPKEKSFAKLMEAAANAGFSLNSDSHQAINFFADEIKGTSSEKALTYQLRHTMSTAVYSEKNTKHFGLAATNYTHFTSPIRRYPDLIIHRLLHLYPSDHSNHTKDEWKERLPEIASHSSDMEHRAVVTERIIDAMKKAEYMSERIGEVYTGTITGLQKFGIFVALDNTVEGLIRVPNLHTGTTEELEFDEEASIFKGKKSETVYQIGQEIKIRVIAANKRKGTVDFEQIAPE</sequence>
<keyword id="KW-0963">Cytoplasm</keyword>
<keyword id="KW-0269">Exonuclease</keyword>
<keyword id="KW-0378">Hydrolase</keyword>
<keyword id="KW-0540">Nuclease</keyword>
<keyword id="KW-1185">Reference proteome</keyword>
<keyword id="KW-0694">RNA-binding</keyword>
<protein>
    <recommendedName>
        <fullName evidence="2">Ribonuclease R 2</fullName>
        <shortName evidence="2">RNase R 2</shortName>
        <ecNumber evidence="2">3.1.13.1</ecNumber>
    </recommendedName>
    <alternativeName>
        <fullName>VacB protein homolog 2</fullName>
    </alternativeName>
</protein>
<comment type="function">
    <text evidence="2">3'-5' exoribonuclease that releases 5'-nucleoside monophosphates and is involved in maturation of structured RNAs.</text>
</comment>
<comment type="catalytic activity">
    <reaction evidence="2">
        <text>Exonucleolytic cleavage in the 3'- to 5'-direction to yield nucleoside 5'-phosphates.</text>
        <dbReference type="EC" id="3.1.13.1"/>
    </reaction>
</comment>
<comment type="subcellular location">
    <subcellularLocation>
        <location evidence="2">Cytoplasm</location>
    </subcellularLocation>
</comment>
<comment type="similarity">
    <text evidence="2">Belongs to the RNR ribonuclease family. RNase R subfamily.</text>
</comment>
<reference key="1">
    <citation type="journal article" date="2001" name="Genome Res.">
        <title>The complete genome sequence of the lactic acid bacterium Lactococcus lactis ssp. lactis IL1403.</title>
        <authorList>
            <person name="Bolotin A."/>
            <person name="Wincker P."/>
            <person name="Mauger S."/>
            <person name="Jaillon O."/>
            <person name="Malarme K."/>
            <person name="Weissenbach J."/>
            <person name="Ehrlich S.D."/>
            <person name="Sorokin A."/>
        </authorList>
    </citation>
    <scope>NUCLEOTIDE SEQUENCE [LARGE SCALE GENOMIC DNA]</scope>
    <source>
        <strain>IL1403</strain>
    </source>
</reference>
<reference key="2">
    <citation type="journal article" date="1992" name="J. Bacteriol.">
        <title>Histidine biosynthesis genes in Lactococcus lactis subsp. lactis.</title>
        <authorList>
            <person name="Delorme C."/>
            <person name="Ehrlich S.D."/>
            <person name="Renault P."/>
        </authorList>
    </citation>
    <scope>NUCLEOTIDE SEQUENCE [GENOMIC DNA] OF 455-665</scope>
    <source>
        <strain>NCDO 2118</strain>
    </source>
</reference>
<reference key="3">
    <citation type="submission" date="1997-11" db="EMBL/GenBank/DDBJ databases">
        <authorList>
            <person name="Delorme C."/>
            <person name="Goupil-Feuillerat N."/>
            <person name="Godon J.-J."/>
            <person name="Ehrlich S.D."/>
            <person name="Renault P."/>
        </authorList>
    </citation>
    <scope>SEQUENCE REVISION TO 518-529</scope>
</reference>
<reference key="4">
    <citation type="journal article" date="1993" name="J. Bacteriol.">
        <title>Gene inactivation in Lactococcus lactis: histidine biosynthesis.</title>
        <authorList>
            <person name="Delorme C."/>
            <person name="Godon J.-J."/>
            <person name="Ehrlich S.D."/>
            <person name="Renault P."/>
        </authorList>
    </citation>
    <scope>NUCLEOTIDE SEQUENCE [GENOMIC DNA] OF 615-665</scope>
    <source>
        <strain>IL1403</strain>
    </source>
</reference>